<reference key="1">
    <citation type="journal article" date="2001" name="Fungal Genet. Biol.">
        <title>Microtubule dynamics during infection-related morphogenesis of Colletotrichum lagenarium.</title>
        <authorList>
            <person name="Takano Y."/>
            <person name="Oshiro E."/>
            <person name="Okuno T."/>
        </authorList>
    </citation>
    <scope>NUCLEOTIDE SEQUENCE [GENOMIC DNA]</scope>
    <source>
        <strain>104-T / ATCC 96160 / CBS 514.97 / LARS 414 / MAFF 240422</strain>
    </source>
</reference>
<reference key="2">
    <citation type="journal article" date="2013" name="New Phytol.">
        <title>Comparative genomic and transcriptomic analyses reveal the hemibiotrophic stage shift of Colletotrichum fungi.</title>
        <authorList>
            <person name="Gan P."/>
            <person name="Ikeda K."/>
            <person name="Irieda H."/>
            <person name="Narusaka M."/>
            <person name="O'Connell R.J."/>
            <person name="Narusaka Y."/>
            <person name="Takano Y."/>
            <person name="Kubo Y."/>
            <person name="Shirasu K."/>
        </authorList>
    </citation>
    <scope>NUCLEOTIDE SEQUENCE [LARGE SCALE GENOMIC DNA]</scope>
    <source>
        <strain>104-T / ATCC 96160 / CBS 514.97 / LARS 414 / MAFF 240422</strain>
    </source>
</reference>
<reference key="3">
    <citation type="journal article" date="2019" name="Mol. Plant Microbe Interact.">
        <title>Genome sequence resources for four phytopathogenic fungi from the Colletotrichum orbiculare species complex.</title>
        <authorList>
            <person name="Gan P."/>
            <person name="Tsushima A."/>
            <person name="Narusaka M."/>
            <person name="Narusaka Y."/>
            <person name="Takano Y."/>
            <person name="Kubo Y."/>
            <person name="Shirasu K."/>
        </authorList>
    </citation>
    <scope>GENOME REANNOTATION</scope>
    <source>
        <strain>104-T / ATCC 96160 / CBS 514.97 / LARS 414 / MAFF 240422</strain>
    </source>
</reference>
<feature type="chain" id="PRO_0000048174" description="Tubulin alpha chain">
    <location>
        <begin position="1"/>
        <end position="454"/>
    </location>
</feature>
<feature type="active site" evidence="2">
    <location>
        <position position="255"/>
    </location>
</feature>
<feature type="binding site" evidence="2">
    <location>
        <position position="12"/>
    </location>
    <ligand>
        <name>GTP</name>
        <dbReference type="ChEBI" id="CHEBI:37565"/>
    </ligand>
</feature>
<feature type="binding site" evidence="2">
    <location>
        <position position="72"/>
    </location>
    <ligand>
        <name>GTP</name>
        <dbReference type="ChEBI" id="CHEBI:37565"/>
    </ligand>
</feature>
<feature type="binding site" evidence="2">
    <location>
        <position position="72"/>
    </location>
    <ligand>
        <name>Mg(2+)</name>
        <dbReference type="ChEBI" id="CHEBI:18420"/>
    </ligand>
</feature>
<feature type="binding site" evidence="2">
    <location>
        <position position="141"/>
    </location>
    <ligand>
        <name>GTP</name>
        <dbReference type="ChEBI" id="CHEBI:37565"/>
    </ligand>
</feature>
<feature type="binding site" evidence="2">
    <location>
        <position position="145"/>
    </location>
    <ligand>
        <name>GTP</name>
        <dbReference type="ChEBI" id="CHEBI:37565"/>
    </ligand>
</feature>
<feature type="binding site" evidence="2">
    <location>
        <position position="146"/>
    </location>
    <ligand>
        <name>GTP</name>
        <dbReference type="ChEBI" id="CHEBI:37565"/>
    </ligand>
</feature>
<feature type="binding site" evidence="2">
    <location>
        <position position="180"/>
    </location>
    <ligand>
        <name>GTP</name>
        <dbReference type="ChEBI" id="CHEBI:37565"/>
    </ligand>
</feature>
<feature type="binding site" evidence="2">
    <location>
        <position position="207"/>
    </location>
    <ligand>
        <name>GTP</name>
        <dbReference type="ChEBI" id="CHEBI:37565"/>
    </ligand>
</feature>
<feature type="binding site" evidence="2">
    <location>
        <position position="229"/>
    </location>
    <ligand>
        <name>GTP</name>
        <dbReference type="ChEBI" id="CHEBI:37565"/>
    </ligand>
</feature>
<feature type="site" description="Involved in polymerization" evidence="1">
    <location>
        <position position="454"/>
    </location>
</feature>
<feature type="sequence conflict" description="In Ref. 1; AAK11178." evidence="3" ref="1">
    <original>AS</original>
    <variation>GF</variation>
    <location>
        <begin position="279"/>
        <end position="280"/>
    </location>
</feature>
<feature type="sequence conflict" description="In Ref. 1; AAK11178." evidence="3" ref="1">
    <location>
        <position position="291"/>
    </location>
</feature>
<feature type="sequence conflict" description="In Ref. 1; AAK11178." evidence="3" ref="1">
    <original>IA</original>
    <variation>MP</variation>
    <location>
        <begin position="389"/>
        <end position="390"/>
    </location>
</feature>
<feature type="sequence conflict" description="In Ref. 1; AAK11178." evidence="3" ref="1">
    <original>RLDH</original>
    <variation>KTGIT</variation>
    <location>
        <begin position="395"/>
        <end position="398"/>
    </location>
</feature>
<feature type="sequence conflict" description="In Ref. 1; AAK11178." evidence="3" ref="1">
    <original>YS</original>
    <variation>SA</variation>
    <location>
        <begin position="404"/>
        <end position="405"/>
    </location>
</feature>
<gene>
    <name type="primary">TUB1</name>
    <name type="ORF">Cob_05533</name>
    <name type="ORF">Cob_v004984</name>
</gene>
<evidence type="ECO:0000250" key="1"/>
<evidence type="ECO:0000250" key="2">
    <source>
        <dbReference type="UniProtKB" id="P68363"/>
    </source>
</evidence>
<evidence type="ECO:0000305" key="3"/>
<protein>
    <recommendedName>
        <fullName>Tubulin alpha chain</fullName>
        <ecNumber evidence="2">3.6.5.-</ecNumber>
    </recommendedName>
    <alternativeName>
        <fullName>Alpha-tubulin</fullName>
    </alternativeName>
</protein>
<proteinExistence type="inferred from homology"/>
<accession>Q9C413</accession>
<accession>A0A484FW37</accession>
<accession>N4VQM2</accession>
<dbReference type="EC" id="3.6.5.-" evidence="2"/>
<dbReference type="EMBL" id="AF321052">
    <property type="protein sequence ID" value="AAK11178.1"/>
    <property type="molecule type" value="Genomic_DNA"/>
</dbReference>
<dbReference type="EMBL" id="KB725738">
    <property type="protein sequence ID" value="ENH86182.1"/>
    <property type="molecule type" value="Genomic_DNA"/>
</dbReference>
<dbReference type="EMBL" id="AMCV02000011">
    <property type="protein sequence ID" value="TDZ21951.1"/>
    <property type="molecule type" value="Genomic_DNA"/>
</dbReference>
<dbReference type="SMR" id="Q9C413"/>
<dbReference type="STRING" id="1213857.Q9C413"/>
<dbReference type="EnsemblFungi" id="ENH86182">
    <property type="protein sequence ID" value="ENH86182"/>
    <property type="gene ID" value="Cob_05533"/>
</dbReference>
<dbReference type="eggNOG" id="KOG1376">
    <property type="taxonomic scope" value="Eukaryota"/>
</dbReference>
<dbReference type="HOGENOM" id="CLU_015718_0_0_1"/>
<dbReference type="OrthoDB" id="1662883at2759"/>
<dbReference type="Proteomes" id="UP000014480">
    <property type="component" value="Unassembled WGS sequence"/>
</dbReference>
<dbReference type="GO" id="GO:0005737">
    <property type="term" value="C:cytoplasm"/>
    <property type="evidence" value="ECO:0007669"/>
    <property type="project" value="UniProtKB-KW"/>
</dbReference>
<dbReference type="GO" id="GO:0005874">
    <property type="term" value="C:microtubule"/>
    <property type="evidence" value="ECO:0007669"/>
    <property type="project" value="UniProtKB-KW"/>
</dbReference>
<dbReference type="GO" id="GO:0005525">
    <property type="term" value="F:GTP binding"/>
    <property type="evidence" value="ECO:0007669"/>
    <property type="project" value="UniProtKB-KW"/>
</dbReference>
<dbReference type="GO" id="GO:0016787">
    <property type="term" value="F:hydrolase activity"/>
    <property type="evidence" value="ECO:0007669"/>
    <property type="project" value="UniProtKB-KW"/>
</dbReference>
<dbReference type="GO" id="GO:0046872">
    <property type="term" value="F:metal ion binding"/>
    <property type="evidence" value="ECO:0007669"/>
    <property type="project" value="UniProtKB-KW"/>
</dbReference>
<dbReference type="GO" id="GO:0005200">
    <property type="term" value="F:structural constituent of cytoskeleton"/>
    <property type="evidence" value="ECO:0007669"/>
    <property type="project" value="InterPro"/>
</dbReference>
<dbReference type="GO" id="GO:0007017">
    <property type="term" value="P:microtubule-based process"/>
    <property type="evidence" value="ECO:0007669"/>
    <property type="project" value="InterPro"/>
</dbReference>
<dbReference type="CDD" id="cd02186">
    <property type="entry name" value="alpha_tubulin"/>
    <property type="match status" value="1"/>
</dbReference>
<dbReference type="FunFam" id="1.10.287.600:FF:000005">
    <property type="entry name" value="Tubulin alpha chain"/>
    <property type="match status" value="1"/>
</dbReference>
<dbReference type="FunFam" id="3.30.1330.20:FF:000006">
    <property type="entry name" value="Tubulin alpha chain"/>
    <property type="match status" value="1"/>
</dbReference>
<dbReference type="FunFam" id="3.40.50.1440:FF:000011">
    <property type="entry name" value="Tubulin alpha chain"/>
    <property type="match status" value="1"/>
</dbReference>
<dbReference type="Gene3D" id="1.10.287.600">
    <property type="entry name" value="Helix hairpin bin"/>
    <property type="match status" value="1"/>
</dbReference>
<dbReference type="Gene3D" id="3.30.1330.20">
    <property type="entry name" value="Tubulin/FtsZ, C-terminal domain"/>
    <property type="match status" value="1"/>
</dbReference>
<dbReference type="Gene3D" id="3.40.50.1440">
    <property type="entry name" value="Tubulin/FtsZ, GTPase domain"/>
    <property type="match status" value="1"/>
</dbReference>
<dbReference type="InterPro" id="IPR002452">
    <property type="entry name" value="Alpha_tubulin"/>
</dbReference>
<dbReference type="InterPro" id="IPR008280">
    <property type="entry name" value="Tub_FtsZ_C"/>
</dbReference>
<dbReference type="InterPro" id="IPR000217">
    <property type="entry name" value="Tubulin"/>
</dbReference>
<dbReference type="InterPro" id="IPR037103">
    <property type="entry name" value="Tubulin/FtsZ-like_C"/>
</dbReference>
<dbReference type="InterPro" id="IPR018316">
    <property type="entry name" value="Tubulin/FtsZ_2-layer-sand-dom"/>
</dbReference>
<dbReference type="InterPro" id="IPR036525">
    <property type="entry name" value="Tubulin/FtsZ_GTPase_sf"/>
</dbReference>
<dbReference type="InterPro" id="IPR023123">
    <property type="entry name" value="Tubulin_C"/>
</dbReference>
<dbReference type="InterPro" id="IPR017975">
    <property type="entry name" value="Tubulin_CS"/>
</dbReference>
<dbReference type="InterPro" id="IPR003008">
    <property type="entry name" value="Tubulin_FtsZ_GTPase"/>
</dbReference>
<dbReference type="PANTHER" id="PTHR11588">
    <property type="entry name" value="TUBULIN"/>
    <property type="match status" value="1"/>
</dbReference>
<dbReference type="Pfam" id="PF00091">
    <property type="entry name" value="Tubulin"/>
    <property type="match status" value="1"/>
</dbReference>
<dbReference type="Pfam" id="PF03953">
    <property type="entry name" value="Tubulin_C"/>
    <property type="match status" value="1"/>
</dbReference>
<dbReference type="PRINTS" id="PR01162">
    <property type="entry name" value="ALPHATUBULIN"/>
</dbReference>
<dbReference type="PRINTS" id="PR01161">
    <property type="entry name" value="TUBULIN"/>
</dbReference>
<dbReference type="SMART" id="SM00864">
    <property type="entry name" value="Tubulin"/>
    <property type="match status" value="1"/>
</dbReference>
<dbReference type="SMART" id="SM00865">
    <property type="entry name" value="Tubulin_C"/>
    <property type="match status" value="1"/>
</dbReference>
<dbReference type="SUPFAM" id="SSF55307">
    <property type="entry name" value="Tubulin C-terminal domain-like"/>
    <property type="match status" value="1"/>
</dbReference>
<dbReference type="SUPFAM" id="SSF52490">
    <property type="entry name" value="Tubulin nucleotide-binding domain-like"/>
    <property type="match status" value="1"/>
</dbReference>
<dbReference type="PROSITE" id="PS00227">
    <property type="entry name" value="TUBULIN"/>
    <property type="match status" value="1"/>
</dbReference>
<comment type="function">
    <text>Tubulin is the major constituent of microtubules, a cylinder consisting of laterally associated linear protofilaments composed of alpha- and beta-tubulin heterodimers. Microtubules grow by the addition of GTP-tubulin dimers to the microtubule end, where a stabilizing cap forms. Below the cap, tubulin dimers are in GDP-bound state, owing to GTPase activity of alpha-tubulin.</text>
</comment>
<comment type="catalytic activity">
    <reaction evidence="2">
        <text>GTP + H2O = GDP + phosphate + H(+)</text>
        <dbReference type="Rhea" id="RHEA:19669"/>
        <dbReference type="ChEBI" id="CHEBI:15377"/>
        <dbReference type="ChEBI" id="CHEBI:15378"/>
        <dbReference type="ChEBI" id="CHEBI:37565"/>
        <dbReference type="ChEBI" id="CHEBI:43474"/>
        <dbReference type="ChEBI" id="CHEBI:58189"/>
    </reaction>
    <physiologicalReaction direction="left-to-right" evidence="2">
        <dbReference type="Rhea" id="RHEA:19670"/>
    </physiologicalReaction>
</comment>
<comment type="cofactor">
    <cofactor evidence="2">
        <name>Mg(2+)</name>
        <dbReference type="ChEBI" id="CHEBI:18420"/>
    </cofactor>
</comment>
<comment type="subunit">
    <text>Dimer of alpha and beta chains. A typical microtubule is a hollow water-filled tube with an outer diameter of 25 nm and an inner diameter of 15 nM. Alpha-beta heterodimers associate head-to-tail to form protofilaments running lengthwise along the microtubule wall with the beta-tubulin subunit facing the microtubule plus end conferring a structural polarity. Microtubules usually have 13 protofilaments but different protofilament numbers can be found in some organisms and specialized cells.</text>
</comment>
<comment type="subcellular location">
    <subcellularLocation>
        <location evidence="1">Cytoplasm</location>
        <location evidence="1">Cytoskeleton</location>
    </subcellularLocation>
</comment>
<comment type="similarity">
    <text evidence="3">Belongs to the tubulin family.</text>
</comment>
<sequence length="454" mass="50266">MKGEILHLHLGQAGTQLGNSAWELYLLEHGLGHDGRPDPSAKDVVDGGSYETFFTETSNGKYVPRSLFVDLDPSPIDEIRTGGYRQLFHPELLISGKEDAANNYARGHYTIGKEMVDNVIDRIRRVADNCHSLQGFLIFHSFGGGTGSGFGALLLERLSTEYGKKSKLEFAVYPAPRVSTAVVEPYNAVLSTHSTIENSDCTFLVDNEAVYDICRRNLDIPRPSYDHLNRLIAQVVSSITSSLRFDGALNVDLNEFQTNLVPYPRIHYPLISYAPVISASKSAHESFKVQELTFQCFEPNNQMVVCDPRNGKYMAVALLYRGDAVPRDCNAAIAALKAKSSFNLVEWCPTGFKLGINYQKPMAVPAAPGDGGLAPVDRSVSMLSNTTAIAEAWSRLDHKFDLMYSKRAFVHWYVGEGMEEGEFSEAREDLAALEKDYEEVAADSYEGDEGEAEY</sequence>
<keyword id="KW-0963">Cytoplasm</keyword>
<keyword id="KW-0206">Cytoskeleton</keyword>
<keyword id="KW-0342">GTP-binding</keyword>
<keyword id="KW-0378">Hydrolase</keyword>
<keyword id="KW-0460">Magnesium</keyword>
<keyword id="KW-0479">Metal-binding</keyword>
<keyword id="KW-0493">Microtubule</keyword>
<keyword id="KW-0547">Nucleotide-binding</keyword>
<keyword id="KW-1185">Reference proteome</keyword>
<organism>
    <name type="scientific">Colletotrichum orbiculare (strain 104-T / ATCC 96160 / CBS 514.97 / LARS 414 / MAFF 240422)</name>
    <name type="common">Cucumber anthracnose fungus</name>
    <name type="synonym">Colletotrichum lagenarium</name>
    <dbReference type="NCBI Taxonomy" id="1213857"/>
    <lineage>
        <taxon>Eukaryota</taxon>
        <taxon>Fungi</taxon>
        <taxon>Dikarya</taxon>
        <taxon>Ascomycota</taxon>
        <taxon>Pezizomycotina</taxon>
        <taxon>Sordariomycetes</taxon>
        <taxon>Hypocreomycetidae</taxon>
        <taxon>Glomerellales</taxon>
        <taxon>Glomerellaceae</taxon>
        <taxon>Colletotrichum</taxon>
        <taxon>Colletotrichum orbiculare species complex</taxon>
    </lineage>
</organism>
<name>TBA_COLOR</name>